<feature type="chain" id="PRO_0000228871" description="Small ribosomal subunit protein uS8c">
    <location>
        <begin position="1"/>
        <end position="134"/>
    </location>
</feature>
<comment type="function">
    <text evidence="1">One of the primary rRNA binding proteins, it binds directly to 16S rRNA central domain where it helps coordinate assembly of the platform of the 30S subunit.</text>
</comment>
<comment type="subunit">
    <text evidence="1">Part of the 30S ribosomal subunit.</text>
</comment>
<comment type="subcellular location">
    <subcellularLocation>
        <location>Plastid</location>
        <location>Chloroplast</location>
    </subcellularLocation>
</comment>
<comment type="similarity">
    <text evidence="2">Belongs to the universal ribosomal protein uS8 family.</text>
</comment>
<gene>
    <name type="primary">rps8</name>
</gene>
<organism>
    <name type="scientific">Gossypium hirsutum</name>
    <name type="common">Upland cotton</name>
    <name type="synonym">Gossypium mexicanum</name>
    <dbReference type="NCBI Taxonomy" id="3635"/>
    <lineage>
        <taxon>Eukaryota</taxon>
        <taxon>Viridiplantae</taxon>
        <taxon>Streptophyta</taxon>
        <taxon>Embryophyta</taxon>
        <taxon>Tracheophyta</taxon>
        <taxon>Spermatophyta</taxon>
        <taxon>Magnoliopsida</taxon>
        <taxon>eudicotyledons</taxon>
        <taxon>Gunneridae</taxon>
        <taxon>Pentapetalae</taxon>
        <taxon>rosids</taxon>
        <taxon>malvids</taxon>
        <taxon>Malvales</taxon>
        <taxon>Malvaceae</taxon>
        <taxon>Malvoideae</taxon>
        <taxon>Gossypium</taxon>
    </lineage>
</organism>
<sequence>MGKDTIADIITSIRNADMNRKGTIQIGSTNITENIVKILLREGFIDNVRKHRERNKYFLVLTLRHRRNRKGPHRTILNLRRISRPGLRIYSNYQQIPRILGGMGIVILSTSRGIMTDREARLEGIGGEILCSIW</sequence>
<name>RR8_GOSHI</name>
<keyword id="KW-0150">Chloroplast</keyword>
<keyword id="KW-0934">Plastid</keyword>
<keyword id="KW-1185">Reference proteome</keyword>
<keyword id="KW-0687">Ribonucleoprotein</keyword>
<keyword id="KW-0689">Ribosomal protein</keyword>
<keyword id="KW-0694">RNA-binding</keyword>
<keyword id="KW-0699">rRNA-binding</keyword>
<accession>Q2L942</accession>
<protein>
    <recommendedName>
        <fullName evidence="2">Small ribosomal subunit protein uS8c</fullName>
    </recommendedName>
    <alternativeName>
        <fullName>30S ribosomal protein S8, chloroplastic</fullName>
    </alternativeName>
</protein>
<dbReference type="EMBL" id="DQ345959">
    <property type="protein sequence ID" value="ABC73662.1"/>
    <property type="molecule type" value="Genomic_DNA"/>
</dbReference>
<dbReference type="RefSeq" id="YP_538971.1">
    <property type="nucleotide sequence ID" value="NC_007944.1"/>
</dbReference>
<dbReference type="SMR" id="Q2L942"/>
<dbReference type="GeneID" id="3989139"/>
<dbReference type="KEGG" id="ghi:3989139"/>
<dbReference type="OrthoDB" id="12185at41938"/>
<dbReference type="Proteomes" id="UP000189702">
    <property type="component" value="Chloroplast Pltd"/>
</dbReference>
<dbReference type="GO" id="GO:0009507">
    <property type="term" value="C:chloroplast"/>
    <property type="evidence" value="ECO:0007669"/>
    <property type="project" value="UniProtKB-SubCell"/>
</dbReference>
<dbReference type="GO" id="GO:1990904">
    <property type="term" value="C:ribonucleoprotein complex"/>
    <property type="evidence" value="ECO:0007669"/>
    <property type="project" value="UniProtKB-KW"/>
</dbReference>
<dbReference type="GO" id="GO:0005840">
    <property type="term" value="C:ribosome"/>
    <property type="evidence" value="ECO:0007669"/>
    <property type="project" value="UniProtKB-KW"/>
</dbReference>
<dbReference type="GO" id="GO:0019843">
    <property type="term" value="F:rRNA binding"/>
    <property type="evidence" value="ECO:0007669"/>
    <property type="project" value="UniProtKB-UniRule"/>
</dbReference>
<dbReference type="GO" id="GO:0003735">
    <property type="term" value="F:structural constituent of ribosome"/>
    <property type="evidence" value="ECO:0000318"/>
    <property type="project" value="GO_Central"/>
</dbReference>
<dbReference type="GO" id="GO:0006412">
    <property type="term" value="P:translation"/>
    <property type="evidence" value="ECO:0007669"/>
    <property type="project" value="UniProtKB-UniRule"/>
</dbReference>
<dbReference type="FunFam" id="3.30.1490.10:FF:000001">
    <property type="entry name" value="30S ribosomal protein S8"/>
    <property type="match status" value="1"/>
</dbReference>
<dbReference type="FunFam" id="3.30.1370.30:FF:000004">
    <property type="entry name" value="30S ribosomal protein S8, chloroplastic"/>
    <property type="match status" value="1"/>
</dbReference>
<dbReference type="Gene3D" id="3.30.1370.30">
    <property type="match status" value="1"/>
</dbReference>
<dbReference type="Gene3D" id="3.30.1490.10">
    <property type="match status" value="1"/>
</dbReference>
<dbReference type="HAMAP" id="MF_01302_B">
    <property type="entry name" value="Ribosomal_uS8_B"/>
    <property type="match status" value="1"/>
</dbReference>
<dbReference type="InterPro" id="IPR000630">
    <property type="entry name" value="Ribosomal_uS8"/>
</dbReference>
<dbReference type="InterPro" id="IPR047863">
    <property type="entry name" value="Ribosomal_uS8_CS"/>
</dbReference>
<dbReference type="InterPro" id="IPR035987">
    <property type="entry name" value="Ribosomal_uS8_sf"/>
</dbReference>
<dbReference type="NCBIfam" id="NF001109">
    <property type="entry name" value="PRK00136.1"/>
    <property type="match status" value="1"/>
</dbReference>
<dbReference type="PANTHER" id="PTHR11758">
    <property type="entry name" value="40S RIBOSOMAL PROTEIN S15A"/>
    <property type="match status" value="1"/>
</dbReference>
<dbReference type="Pfam" id="PF00410">
    <property type="entry name" value="Ribosomal_S8"/>
    <property type="match status" value="1"/>
</dbReference>
<dbReference type="SUPFAM" id="SSF56047">
    <property type="entry name" value="Ribosomal protein S8"/>
    <property type="match status" value="1"/>
</dbReference>
<dbReference type="PROSITE" id="PS00053">
    <property type="entry name" value="RIBOSOMAL_S8"/>
    <property type="match status" value="1"/>
</dbReference>
<proteinExistence type="inferred from homology"/>
<geneLocation type="chloroplast"/>
<reference key="1">
    <citation type="journal article" date="2006" name="BMC Genomics">
        <title>The complete chloroplast genome sequence of Gossypium hirsutum: organization and phylogenetic relationships to other angiosperms.</title>
        <authorList>
            <person name="Lee S.-B."/>
            <person name="Kaittanis C."/>
            <person name="Jansen R.K."/>
            <person name="Hostetler J.B."/>
            <person name="Tallon L.J."/>
            <person name="Town C.D."/>
            <person name="Daniell H."/>
        </authorList>
    </citation>
    <scope>NUCLEOTIDE SEQUENCE [LARGE SCALE GENOMIC DNA]</scope>
    <source>
        <strain>cv. Coker 310FR</strain>
    </source>
</reference>
<evidence type="ECO:0000250" key="1"/>
<evidence type="ECO:0000305" key="2"/>